<name>PESC_ASPCL</name>
<comment type="function">
    <text evidence="1">Component of the NOP7 complex, which is required for maturation of the 25S and 5.8S ribosomal RNAs and formation of the 60S ribosome.</text>
</comment>
<comment type="subunit">
    <text evidence="1">Component of the NOP7 complex, composed of erb1, nop7 and ytm1. The complex is held together by erb1, which interacts with nop7 via its N-terminal domain and with ytm1 via a high-affinity interaction between the seven-bladed beta-propeller domains of the 2 proteins. The NOP7 complex associates with the 66S pre-ribosome.</text>
</comment>
<comment type="subcellular location">
    <subcellularLocation>
        <location evidence="1">Nucleus</location>
        <location evidence="1">Nucleolus</location>
    </subcellularLocation>
    <subcellularLocation>
        <location evidence="1">Nucleus</location>
        <location evidence="1">Nucleoplasm</location>
    </subcellularLocation>
</comment>
<comment type="similarity">
    <text evidence="1">Belongs to the pescadillo family.</text>
</comment>
<accession>A1CHD1</accession>
<gene>
    <name type="primary">nop7</name>
    <name type="ORF">ACLA_047550</name>
</gene>
<organism>
    <name type="scientific">Aspergillus clavatus (strain ATCC 1007 / CBS 513.65 / DSM 816 / NCTC 3887 / NRRL 1 / QM 1276 / 107)</name>
    <dbReference type="NCBI Taxonomy" id="344612"/>
    <lineage>
        <taxon>Eukaryota</taxon>
        <taxon>Fungi</taxon>
        <taxon>Dikarya</taxon>
        <taxon>Ascomycota</taxon>
        <taxon>Pezizomycotina</taxon>
        <taxon>Eurotiomycetes</taxon>
        <taxon>Eurotiomycetidae</taxon>
        <taxon>Eurotiales</taxon>
        <taxon>Aspergillaceae</taxon>
        <taxon>Aspergillus</taxon>
        <taxon>Aspergillus subgen. Fumigati</taxon>
    </lineage>
</organism>
<protein>
    <recommendedName>
        <fullName evidence="1">Pescadillo homolog</fullName>
    </recommendedName>
    <alternativeName>
        <fullName evidence="1">Nucleolar protein 7 homolog</fullName>
    </alternativeName>
</protein>
<dbReference type="EMBL" id="DS027054">
    <property type="protein sequence ID" value="EAW10286.1"/>
    <property type="molecule type" value="Genomic_DNA"/>
</dbReference>
<dbReference type="RefSeq" id="XP_001271712.1">
    <property type="nucleotide sequence ID" value="XM_001271711.1"/>
</dbReference>
<dbReference type="SMR" id="A1CHD1"/>
<dbReference type="STRING" id="344612.A1CHD1"/>
<dbReference type="EnsemblFungi" id="EAW10286">
    <property type="protein sequence ID" value="EAW10286"/>
    <property type="gene ID" value="ACLA_047550"/>
</dbReference>
<dbReference type="GeneID" id="4704232"/>
<dbReference type="KEGG" id="act:ACLA_047550"/>
<dbReference type="VEuPathDB" id="FungiDB:ACLA_047550"/>
<dbReference type="eggNOG" id="KOG2481">
    <property type="taxonomic scope" value="Eukaryota"/>
</dbReference>
<dbReference type="HOGENOM" id="CLU_019619_1_1_1"/>
<dbReference type="OMA" id="QKVTWIV"/>
<dbReference type="OrthoDB" id="10264910at2759"/>
<dbReference type="Proteomes" id="UP000006701">
    <property type="component" value="Unassembled WGS sequence"/>
</dbReference>
<dbReference type="GO" id="GO:0005654">
    <property type="term" value="C:nucleoplasm"/>
    <property type="evidence" value="ECO:0007669"/>
    <property type="project" value="UniProtKB-SubCell"/>
</dbReference>
<dbReference type="GO" id="GO:0070545">
    <property type="term" value="C:PeBoW complex"/>
    <property type="evidence" value="ECO:0007669"/>
    <property type="project" value="TreeGrafter"/>
</dbReference>
<dbReference type="GO" id="GO:0030687">
    <property type="term" value="C:preribosome, large subunit precursor"/>
    <property type="evidence" value="ECO:0007669"/>
    <property type="project" value="UniProtKB-UniRule"/>
</dbReference>
<dbReference type="GO" id="GO:0043021">
    <property type="term" value="F:ribonucleoprotein complex binding"/>
    <property type="evidence" value="ECO:0007669"/>
    <property type="project" value="UniProtKB-UniRule"/>
</dbReference>
<dbReference type="GO" id="GO:0003723">
    <property type="term" value="F:RNA binding"/>
    <property type="evidence" value="ECO:0007669"/>
    <property type="project" value="TreeGrafter"/>
</dbReference>
<dbReference type="GO" id="GO:0000466">
    <property type="term" value="P:maturation of 5.8S rRNA from tricistronic rRNA transcript (SSU-rRNA, 5.8S rRNA, LSU-rRNA)"/>
    <property type="evidence" value="ECO:0007669"/>
    <property type="project" value="UniProtKB-UniRule"/>
</dbReference>
<dbReference type="GO" id="GO:0000463">
    <property type="term" value="P:maturation of LSU-rRNA from tricistronic rRNA transcript (SSU-rRNA, 5.8S rRNA, LSU-rRNA)"/>
    <property type="evidence" value="ECO:0007669"/>
    <property type="project" value="UniProtKB-UniRule"/>
</dbReference>
<dbReference type="CDD" id="cd17709">
    <property type="entry name" value="BRCT_pescadillo_like"/>
    <property type="match status" value="1"/>
</dbReference>
<dbReference type="FunFam" id="3.40.50.10190:FF:000056">
    <property type="entry name" value="Pescadillo homolog"/>
    <property type="match status" value="1"/>
</dbReference>
<dbReference type="Gene3D" id="3.40.50.10190">
    <property type="entry name" value="BRCT domain"/>
    <property type="match status" value="1"/>
</dbReference>
<dbReference type="HAMAP" id="MF_03028">
    <property type="entry name" value="Pescadillo"/>
    <property type="match status" value="1"/>
</dbReference>
<dbReference type="InterPro" id="IPR001357">
    <property type="entry name" value="BRCT_dom"/>
</dbReference>
<dbReference type="InterPro" id="IPR036420">
    <property type="entry name" value="BRCT_dom_sf"/>
</dbReference>
<dbReference type="InterPro" id="IPR010613">
    <property type="entry name" value="PES"/>
</dbReference>
<dbReference type="PANTHER" id="PTHR12221">
    <property type="entry name" value="PESCADILLO - RELATED"/>
    <property type="match status" value="1"/>
</dbReference>
<dbReference type="PANTHER" id="PTHR12221:SF6">
    <property type="entry name" value="PESCADILLO HOMOLOG"/>
    <property type="match status" value="1"/>
</dbReference>
<dbReference type="Pfam" id="PF06732">
    <property type="entry name" value="Pescadillo_N"/>
    <property type="match status" value="1"/>
</dbReference>
<dbReference type="SUPFAM" id="SSF52113">
    <property type="entry name" value="BRCT domain"/>
    <property type="match status" value="1"/>
</dbReference>
<dbReference type="PROSITE" id="PS50172">
    <property type="entry name" value="BRCT"/>
    <property type="match status" value="1"/>
</dbReference>
<feature type="chain" id="PRO_0000370478" description="Pescadillo homolog">
    <location>
        <begin position="1"/>
        <end position="680"/>
    </location>
</feature>
<feature type="domain" description="BRCT" evidence="1">
    <location>
        <begin position="351"/>
        <end position="470"/>
    </location>
</feature>
<feature type="region of interest" description="Disordered" evidence="2">
    <location>
        <begin position="310"/>
        <end position="330"/>
    </location>
</feature>
<feature type="region of interest" description="Disordered" evidence="2">
    <location>
        <begin position="472"/>
        <end position="680"/>
    </location>
</feature>
<feature type="coiled-coil region" evidence="1">
    <location>
        <begin position="496"/>
        <end position="523"/>
    </location>
</feature>
<feature type="coiled-coil region" evidence="1">
    <location>
        <begin position="613"/>
        <end position="680"/>
    </location>
</feature>
<feature type="compositionally biased region" description="Acidic residues" evidence="2">
    <location>
        <begin position="497"/>
        <end position="518"/>
    </location>
</feature>
<feature type="compositionally biased region" description="Basic and acidic residues" evidence="2">
    <location>
        <begin position="519"/>
        <end position="529"/>
    </location>
</feature>
<feature type="compositionally biased region" description="Acidic residues" evidence="2">
    <location>
        <begin position="530"/>
        <end position="543"/>
    </location>
</feature>
<feature type="compositionally biased region" description="Acidic residues" evidence="2">
    <location>
        <begin position="551"/>
        <end position="585"/>
    </location>
</feature>
<feature type="compositionally biased region" description="Basic and acidic residues" evidence="2">
    <location>
        <begin position="586"/>
        <end position="596"/>
    </location>
</feature>
<feature type="compositionally biased region" description="Basic residues" evidence="2">
    <location>
        <begin position="616"/>
        <end position="628"/>
    </location>
</feature>
<feature type="compositionally biased region" description="Basic and acidic residues" evidence="2">
    <location>
        <begin position="629"/>
        <end position="639"/>
    </location>
</feature>
<sequence>MGKIKKKGTSGQAKNYITRTQAVRKLQISLPDFRRLCIFKGIYPREPRSKKKASKTSTPNTTFYYTKDIQYLLHEPLLRKFRDQKAVAKKIARSLGRGEVGDAARLEKNHAPKLTLDHVIKERYPTFIDALRDLDDALSLLFLFANLPSDAHVPPKTIALCQRLCHEFQHYLITTNSLRKSFLSIKGIYYQATIQGQDIMWLVPYRFVQRVNGDVDYRIMATFVDFYTTLLGFVNFRLYSSIGLRYPPKFDTRSDENGAELAAFTLEGRAVGDVPKAIEAGHTQRSSSANKEVSRDIQAKVDKVIKSAGLDQAKDEQTAETTEESSDTIDKFEPAAPEADTLAQPDLSGSQAGSLFAPFTFYISREAPRAPLEFLLRAFGCKRIGWDAVLGDGAFTNDETDPRITHQIVDRPQLPESSLPAIPAAAEEDSGAVQKVKPGTRIPGRTYVQPQWVWDCINEGKLVRPDLYSPGATLPPHLSPWVKPSRGGYDPRASLAEQEEEGEAEMAEDSDEEMEEAADEKSKTASKDEAESESEEDDDDESVDGGMDVAGTDDDESESESEEEDEDFGGFEDDEAASESEDEEEVARTQHQKELEAEAAGLPFSSNGATSDASKKKASQAKKIAAKKRKEEEEIERQKMMMSRKKRKLLEKMMYSNKKQSEEAAKLRSKRRKLEKGAAK</sequence>
<evidence type="ECO:0000255" key="1">
    <source>
        <dbReference type="HAMAP-Rule" id="MF_03028"/>
    </source>
</evidence>
<evidence type="ECO:0000256" key="2">
    <source>
        <dbReference type="SAM" id="MobiDB-lite"/>
    </source>
</evidence>
<keyword id="KW-0175">Coiled coil</keyword>
<keyword id="KW-0539">Nucleus</keyword>
<keyword id="KW-1185">Reference proteome</keyword>
<keyword id="KW-0690">Ribosome biogenesis</keyword>
<keyword id="KW-0698">rRNA processing</keyword>
<reference key="1">
    <citation type="journal article" date="2008" name="PLoS Genet.">
        <title>Genomic islands in the pathogenic filamentous fungus Aspergillus fumigatus.</title>
        <authorList>
            <person name="Fedorova N.D."/>
            <person name="Khaldi N."/>
            <person name="Joardar V.S."/>
            <person name="Maiti R."/>
            <person name="Amedeo P."/>
            <person name="Anderson M.J."/>
            <person name="Crabtree J."/>
            <person name="Silva J.C."/>
            <person name="Badger J.H."/>
            <person name="Albarraq A."/>
            <person name="Angiuoli S."/>
            <person name="Bussey H."/>
            <person name="Bowyer P."/>
            <person name="Cotty P.J."/>
            <person name="Dyer P.S."/>
            <person name="Egan A."/>
            <person name="Galens K."/>
            <person name="Fraser-Liggett C.M."/>
            <person name="Haas B.J."/>
            <person name="Inman J.M."/>
            <person name="Kent R."/>
            <person name="Lemieux S."/>
            <person name="Malavazi I."/>
            <person name="Orvis J."/>
            <person name="Roemer T."/>
            <person name="Ronning C.M."/>
            <person name="Sundaram J.P."/>
            <person name="Sutton G."/>
            <person name="Turner G."/>
            <person name="Venter J.C."/>
            <person name="White O.R."/>
            <person name="Whitty B.R."/>
            <person name="Youngman P."/>
            <person name="Wolfe K.H."/>
            <person name="Goldman G.H."/>
            <person name="Wortman J.R."/>
            <person name="Jiang B."/>
            <person name="Denning D.W."/>
            <person name="Nierman W.C."/>
        </authorList>
    </citation>
    <scope>NUCLEOTIDE SEQUENCE [LARGE SCALE GENOMIC DNA]</scope>
    <source>
        <strain>ATCC 1007 / CBS 513.65 / DSM 816 / NCTC 3887 / NRRL 1 / QM 1276 / 107</strain>
    </source>
</reference>
<proteinExistence type="inferred from homology"/>